<evidence type="ECO:0000250" key="1">
    <source>
        <dbReference type="UniProtKB" id="B8M9J8"/>
    </source>
</evidence>
<evidence type="ECO:0000250" key="2">
    <source>
        <dbReference type="UniProtKB" id="E1ACP7"/>
    </source>
</evidence>
<evidence type="ECO:0000250" key="3">
    <source>
        <dbReference type="UniProtKB" id="L0E4H0"/>
    </source>
</evidence>
<evidence type="ECO:0000255" key="4"/>
<evidence type="ECO:0000255" key="5">
    <source>
        <dbReference type="PROSITE-ProRule" id="PRU00498"/>
    </source>
</evidence>
<evidence type="ECO:0000269" key="6">
    <source>
    </source>
</evidence>
<evidence type="ECO:0000269" key="7">
    <source>
    </source>
</evidence>
<evidence type="ECO:0000269" key="8">
    <source>
    </source>
</evidence>
<evidence type="ECO:0000303" key="9">
    <source>
    </source>
</evidence>
<evidence type="ECO:0000305" key="10"/>
<evidence type="ECO:0000305" key="11">
    <source>
    </source>
</evidence>
<name>NOTB_ASPVE</name>
<accession>L7WME6</accession>
<proteinExistence type="evidence at protein level"/>
<dbReference type="EC" id="1.14.13.-" evidence="2"/>
<dbReference type="EMBL" id="JQ708194">
    <property type="protein sequence ID" value="AGC83573.1"/>
    <property type="molecule type" value="Genomic_DNA"/>
</dbReference>
<dbReference type="SMR" id="L7WME6"/>
<dbReference type="GlyCosmos" id="L7WME6">
    <property type="glycosylation" value="1 site, No reported glycans"/>
</dbReference>
<dbReference type="VEuPathDB" id="FungiDB:ASPVEDRAFT_195793"/>
<dbReference type="GO" id="GO:0016020">
    <property type="term" value="C:membrane"/>
    <property type="evidence" value="ECO:0007669"/>
    <property type="project" value="UniProtKB-SubCell"/>
</dbReference>
<dbReference type="GO" id="GO:0071949">
    <property type="term" value="F:FAD binding"/>
    <property type="evidence" value="ECO:0007669"/>
    <property type="project" value="InterPro"/>
</dbReference>
<dbReference type="GO" id="GO:0004497">
    <property type="term" value="F:monooxygenase activity"/>
    <property type="evidence" value="ECO:0007669"/>
    <property type="project" value="UniProtKB-KW"/>
</dbReference>
<dbReference type="GO" id="GO:0009820">
    <property type="term" value="P:alkaloid metabolic process"/>
    <property type="evidence" value="ECO:0007669"/>
    <property type="project" value="UniProtKB-KW"/>
</dbReference>
<dbReference type="GO" id="GO:0009058">
    <property type="term" value="P:biosynthetic process"/>
    <property type="evidence" value="ECO:0007669"/>
    <property type="project" value="UniProtKB-ARBA"/>
</dbReference>
<dbReference type="Gene3D" id="3.50.50.60">
    <property type="entry name" value="FAD/NAD(P)-binding domain"/>
    <property type="match status" value="1"/>
</dbReference>
<dbReference type="InterPro" id="IPR002938">
    <property type="entry name" value="FAD-bd"/>
</dbReference>
<dbReference type="InterPro" id="IPR050493">
    <property type="entry name" value="FAD-dep_Monooxygenase_BioMet"/>
</dbReference>
<dbReference type="InterPro" id="IPR036188">
    <property type="entry name" value="FAD/NAD-bd_sf"/>
</dbReference>
<dbReference type="PANTHER" id="PTHR13789">
    <property type="entry name" value="MONOOXYGENASE"/>
    <property type="match status" value="1"/>
</dbReference>
<dbReference type="PANTHER" id="PTHR13789:SF236">
    <property type="entry name" value="MONOOXYGENASE, PUTATIVE (AFU_ORTHOLOGUE AFUA_6G12060)-RELATED"/>
    <property type="match status" value="1"/>
</dbReference>
<dbReference type="Pfam" id="PF01494">
    <property type="entry name" value="FAD_binding_3"/>
    <property type="match status" value="2"/>
</dbReference>
<dbReference type="PRINTS" id="PR00420">
    <property type="entry name" value="RNGMNOXGNASE"/>
</dbReference>
<dbReference type="SUPFAM" id="SSF51905">
    <property type="entry name" value="FAD/NAD(P)-binding domain"/>
    <property type="match status" value="1"/>
</dbReference>
<sequence length="455" mass="49194">MTKSQTNPRGPAILSPADLTVIIVGLGIAGLTAAIECHRKGYTVIGLEKKPDANQLGDIIGLSGNSMRILAEWNNGSLAHLIDDDITCDVTALELFDAEGHRKLAMPYNANNPIQGYLFRRTGLLTSLCHYASQLGIDLRFGVTVDDYWETDSNAGVYANNEKITGDCVVAADGFHSKARGIITGENPEPKDIGVVAYRSIFDANAIADVPEAQWILKNAQTADIFHSYYGKDTMVAIGTAARGRYVHWGCAVRGALEEKYEAWMQPAPPDPILKCLESWPVGSKLAAGIARTPPGKCFQQSLRAMPPLKRWVSTGGRMIVIGDAAHSFLPYAGQGGNQAIEDAAVLGICLELAGTSNVPLALRVVEKLRHKRVSLIQKGSAEAGDSFLNAAWESDNAAEKPTAFTHQAWVYAHNCVDHAYEQFNAAAEAVMNGWEYTPTNIPANGKFRQEEGNI</sequence>
<protein>
    <recommendedName>
        <fullName evidence="2">Notoamide E oxidase notB'</fullName>
        <ecNumber evidence="2">1.14.13.-</ecNumber>
    </recommendedName>
    <alternativeName>
        <fullName evidence="9">FAD-dependent monooxygenase notB'</fullName>
    </alternativeName>
    <alternativeName>
        <fullName evidence="9">Notoamide biosynthesis cluster protein B'</fullName>
    </alternativeName>
</protein>
<gene>
    <name evidence="9" type="primary">notB'</name>
</gene>
<feature type="chain" id="PRO_0000448802" description="Notoamide E oxidase notB'">
    <location>
        <begin position="1"/>
        <end position="455"/>
    </location>
</feature>
<feature type="transmembrane region" description="Helical" evidence="4">
    <location>
        <begin position="11"/>
        <end position="31"/>
    </location>
</feature>
<feature type="active site" evidence="3">
    <location>
        <position position="199"/>
    </location>
</feature>
<feature type="active site" evidence="1">
    <location>
        <position position="229"/>
    </location>
</feature>
<feature type="binding site" evidence="1">
    <location>
        <position position="48"/>
    </location>
    <ligand>
        <name>FAD</name>
        <dbReference type="ChEBI" id="CHEBI:57692"/>
    </ligand>
</feature>
<feature type="binding site" evidence="1">
    <location>
        <position position="61"/>
    </location>
    <ligand>
        <name>FAD</name>
        <dbReference type="ChEBI" id="CHEBI:57692"/>
    </ligand>
</feature>
<feature type="binding site" evidence="1">
    <location>
        <position position="121"/>
    </location>
    <ligand>
        <name>FAD</name>
        <dbReference type="ChEBI" id="CHEBI:57692"/>
    </ligand>
</feature>
<feature type="binding site" evidence="1">
    <location>
        <position position="324"/>
    </location>
    <ligand>
        <name>FAD</name>
        <dbReference type="ChEBI" id="CHEBI:57692"/>
    </ligand>
</feature>
<feature type="binding site" evidence="1">
    <location>
        <position position="337"/>
    </location>
    <ligand>
        <name>FAD</name>
        <dbReference type="ChEBI" id="CHEBI:57692"/>
    </ligand>
</feature>
<feature type="glycosylation site" description="N-linked (GlcNAc...) asparagine" evidence="5">
    <location>
        <position position="75"/>
    </location>
</feature>
<organism>
    <name type="scientific">Aspergillus versicolor</name>
    <dbReference type="NCBI Taxonomy" id="46472"/>
    <lineage>
        <taxon>Eukaryota</taxon>
        <taxon>Fungi</taxon>
        <taxon>Dikarya</taxon>
        <taxon>Ascomycota</taxon>
        <taxon>Pezizomycotina</taxon>
        <taxon>Eurotiomycetes</taxon>
        <taxon>Eurotiomycetidae</taxon>
        <taxon>Eurotiales</taxon>
        <taxon>Aspergillaceae</taxon>
        <taxon>Aspergillus</taxon>
        <taxon>Aspergillus subgen. Nidulantes</taxon>
    </lineage>
</organism>
<comment type="function">
    <text evidence="7 8 11">FAD-dependent monooxygenase; part of the gene cluster that mediates the biosynthesis of notoamide, a fungal indole alkaloid that belongs to a family of natural products containing a characteristic bicyclo[2.2.2]diazaoctane core (PubMed:23213353). The first step of notoamide biosynthesis involves coupling of L-proline and L-tryptophan by the bimodular NRPS notE', to produce cyclo-L-tryptophan-L-proline called brevianamide F (Probable). The reverse prenyltransferase notF' then acts as a deoxybrevianamide E synthase and converts brevianamide F to deoxybrevianamide E via reverse prenylation at C-2 of the indole ring leading to the bicyclo[2.2.2]diazaoctane core (Probable) (PubMed:22660767). Deoxybrevianamide E is further hydroxylated at C-6 of the indole ring, likely catalyzed by the cytochrome P450 monooxygenase notG', to yield 6-hydroxy-deoxybrevianamide E (Probable). 6-hydroxy-deoxybrevianamide E is a specific substrate of the prenyltransferase notC' for normal prenylation at C-7 to produce 6-hydroxy-7-prenyl-deoxybrevianamide, also called notoamide S (Probable). As the proposed pivotal branching point in notoamide biosynthesis, notoamide S can be diverted to notoamide E through an oxidative pyran ring closure putatively catalyzed by either notH' cytochrome P450 monooxygenase or the notD' FAD-linked oxidoreductase (Probable). This step would be followed by an indole 2,3-epoxidation-initiated pinacol-like rearrangement catalyzed by the notB' FAD-dependent monooxygenase leading to the formation of notoamide C and notoamide D (Probable). On the other hand notoamide S is converted to notoamide T by notH' (or notD'), a bifunctional oxidase that also functions as the intramolecular Diels-Alderase responsible for generation of (-)-notoamide T (Probable). To generate antipodal (+)-notoaminide T, notH (or notD) in Aspergillus strain MF297-2 is expected to catalyze a Diels-Alder reaction leading to the opposite stereochemistry (Probable). The remaining oxidoreductase notD' (or notH') likely catalyzes the oxidative pyran ring formation to yield (-)-stephacidin A (Probable). The FAD-dependent monooxygenase notI' is highly similar to notB' and is predicted to catalyze a similar conversion from (-)-stephacidin A to (+)-notoamide B via the 2,3-epoxidation of (-)-stephacidin A followed by a pinacol-type rearrangement (Probable). Finally, it remains unclear which enzyme could be responsible for the final hydroxylation steps leading to notoamide A and sclerotiamide (Probable).</text>
</comment>
<comment type="catalytic activity">
    <reaction evidence="2">
        <text>notoamide E + NADPH + O2 + H(+) = notoamide C + NADP(+) + H2O</text>
        <dbReference type="Rhea" id="RHEA:62348"/>
        <dbReference type="ChEBI" id="CHEBI:15377"/>
        <dbReference type="ChEBI" id="CHEBI:15378"/>
        <dbReference type="ChEBI" id="CHEBI:15379"/>
        <dbReference type="ChEBI" id="CHEBI:57783"/>
        <dbReference type="ChEBI" id="CHEBI:58349"/>
        <dbReference type="ChEBI" id="CHEBI:145684"/>
        <dbReference type="ChEBI" id="CHEBI:145685"/>
    </reaction>
    <physiologicalReaction direction="left-to-right" evidence="2">
        <dbReference type="Rhea" id="RHEA:62349"/>
    </physiologicalReaction>
</comment>
<comment type="catalytic activity">
    <reaction evidence="2">
        <text>notoamide E + NADPH + O2 + H(+) = notoamide D + NADP(+) + H2O</text>
        <dbReference type="Rhea" id="RHEA:62352"/>
        <dbReference type="ChEBI" id="CHEBI:15377"/>
        <dbReference type="ChEBI" id="CHEBI:15378"/>
        <dbReference type="ChEBI" id="CHEBI:15379"/>
        <dbReference type="ChEBI" id="CHEBI:57783"/>
        <dbReference type="ChEBI" id="CHEBI:58349"/>
        <dbReference type="ChEBI" id="CHEBI:145684"/>
        <dbReference type="ChEBI" id="CHEBI:145686"/>
    </reaction>
    <physiologicalReaction direction="left-to-right" evidence="2">
        <dbReference type="Rhea" id="RHEA:62353"/>
    </physiologicalReaction>
</comment>
<comment type="cofactor">
    <cofactor evidence="10">
        <name>FAD</name>
        <dbReference type="ChEBI" id="CHEBI:57692"/>
    </cofactor>
</comment>
<comment type="pathway">
    <text evidence="2">Alkaloid biosynthesis.</text>
</comment>
<comment type="subcellular location">
    <subcellularLocation>
        <location evidence="4">Membrane</location>
        <topology evidence="4">Single-pass membrane protein</topology>
    </subcellularLocation>
</comment>
<comment type="biotechnology">
    <text evidence="6">Notoamides have been shown to exhibit antitumoral activities (PubMed:17304611). Notoamides A-C show moderate cytotoxicity against HeLa and L1210 cells with IC(50) values in the range of 22-52 mg/ml, but the IC(50) value of notoamide D is greater than 100 mg/ml (PubMed:17304611). Moreover, notoamide C induces G2/M-cell cycle arrest at a concentration of 6.3 mg/ml (PubMed:17304611).</text>
</comment>
<comment type="similarity">
    <text evidence="10">Belongs to the paxM FAD-dependent monooxygenase family.</text>
</comment>
<keyword id="KW-0017">Alkaloid metabolism</keyword>
<keyword id="KW-0274">FAD</keyword>
<keyword id="KW-0285">Flavoprotein</keyword>
<keyword id="KW-0325">Glycoprotein</keyword>
<keyword id="KW-0472">Membrane</keyword>
<keyword id="KW-0503">Monooxygenase</keyword>
<keyword id="KW-0560">Oxidoreductase</keyword>
<keyword id="KW-0812">Transmembrane</keyword>
<keyword id="KW-1133">Transmembrane helix</keyword>
<reference key="1">
    <citation type="journal article" date="2012" name="Med. Chem. Commun.">
        <title>Comparative analysis of the biosynthetic systems for fungal bicyclo[2.2.2]diazaoctane indole alkaloids: the (+)/(-)-notoamide, paraherquamide and malbrancheamide pathways.</title>
        <authorList>
            <person name="Li S."/>
            <person name="Anand K."/>
            <person name="Tran H."/>
            <person name="Yu F."/>
            <person name="Finefield J.M."/>
            <person name="Sunderhaus J.D."/>
            <person name="McAfoos T.J."/>
            <person name="Tsukamoto S."/>
            <person name="Williams R.M."/>
            <person name="Sherman D.H."/>
        </authorList>
    </citation>
    <scope>NUCLEOTIDE SEQUENCE [GENOMIC DNA]</scope>
    <scope>FUNCTION</scope>
    <source>
        <strain>NRRL 35600</strain>
    </source>
</reference>
<reference key="2">
    <citation type="journal article" date="2007" name="Angew. Chem. Int. Ed.">
        <title>Notoamides A-D: prenylated indole alkaloids isolated from a marine-derived fungus, Aspergillus sp.</title>
        <authorList>
            <person name="Kato H."/>
            <person name="Yoshida T."/>
            <person name="Tokue T."/>
            <person name="Nojiri Y."/>
            <person name="Hirota H."/>
            <person name="Ohta T."/>
            <person name="Williams R.M."/>
            <person name="Tsukamoto S."/>
        </authorList>
    </citation>
    <scope>BIOTECHNOLOGY</scope>
</reference>
<reference key="3">
    <citation type="journal article" date="2013" name="Appl. Microbiol. Biotechnol.">
        <title>Identification of a brevianamide F reverse prenyltransferase BrePT from Aspergillus versicolor with a broad substrate specificity towards tryptophan-containing cyclic dipeptides.</title>
        <authorList>
            <person name="Yin S."/>
            <person name="Yu X."/>
            <person name="Wang Q."/>
            <person name="Liu X.Q."/>
            <person name="Li S.M."/>
        </authorList>
    </citation>
    <scope>FUNCTION</scope>
</reference>